<keyword id="KW-0049">Antioxidant</keyword>
<keyword id="KW-0186">Copper</keyword>
<keyword id="KW-1015">Disulfide bond</keyword>
<keyword id="KW-0479">Metal-binding</keyword>
<keyword id="KW-0560">Oxidoreductase</keyword>
<keyword id="KW-0574">Periplasm</keyword>
<keyword id="KW-1185">Reference proteome</keyword>
<keyword id="KW-0732">Signal</keyword>
<keyword id="KW-0862">Zinc</keyword>
<organism>
    <name type="scientific">Escherichia coli O157:H7</name>
    <dbReference type="NCBI Taxonomy" id="83334"/>
    <lineage>
        <taxon>Bacteria</taxon>
        <taxon>Pseudomonadati</taxon>
        <taxon>Pseudomonadota</taxon>
        <taxon>Gammaproteobacteria</taxon>
        <taxon>Enterobacterales</taxon>
        <taxon>Enterobacteriaceae</taxon>
        <taxon>Escherichia</taxon>
    </lineage>
</organism>
<proteinExistence type="inferred from homology"/>
<evidence type="ECO:0000250" key="1"/>
<evidence type="ECO:0000256" key="2">
    <source>
        <dbReference type="SAM" id="MobiDB-lite"/>
    </source>
</evidence>
<evidence type="ECO:0000305" key="3"/>
<accession>P0AGD2</accession>
<accession>P53635</accession>
<accession>P96756</accession>
<protein>
    <recommendedName>
        <fullName>Superoxide dismutase [Cu-Zn]</fullName>
        <ecNumber>1.15.1.1</ecNumber>
    </recommendedName>
    <alternativeName>
        <fullName>Bacteriocuprein</fullName>
    </alternativeName>
</protein>
<feature type="signal peptide" evidence="1">
    <location>
        <begin position="1"/>
        <end position="19"/>
    </location>
</feature>
<feature type="chain" id="PRO_0000045306" description="Superoxide dismutase [Cu-Zn]">
    <location>
        <begin position="20"/>
        <end position="173"/>
    </location>
</feature>
<feature type="region of interest" description="Disordered" evidence="2">
    <location>
        <begin position="72"/>
        <end position="113"/>
    </location>
</feature>
<feature type="binding site" evidence="1">
    <location>
        <position position="67"/>
    </location>
    <ligand>
        <name>Cu cation</name>
        <dbReference type="ChEBI" id="CHEBI:23378"/>
        <note>catalytic</note>
    </ligand>
</feature>
<feature type="binding site" evidence="1">
    <location>
        <position position="69"/>
    </location>
    <ligand>
        <name>Cu cation</name>
        <dbReference type="ChEBI" id="CHEBI:23378"/>
        <note>catalytic</note>
    </ligand>
</feature>
<feature type="binding site" evidence="1">
    <location>
        <position position="92"/>
    </location>
    <ligand>
        <name>Cu cation</name>
        <dbReference type="ChEBI" id="CHEBI:23378"/>
        <note>catalytic</note>
    </ligand>
</feature>
<feature type="binding site" evidence="1">
    <location>
        <position position="92"/>
    </location>
    <ligand>
        <name>Zn(2+)</name>
        <dbReference type="ChEBI" id="CHEBI:29105"/>
        <note>structural</note>
    </ligand>
</feature>
<feature type="binding site" evidence="1">
    <location>
        <position position="101"/>
    </location>
    <ligand>
        <name>Zn(2+)</name>
        <dbReference type="ChEBI" id="CHEBI:29105"/>
        <note>structural</note>
    </ligand>
</feature>
<feature type="binding site" evidence="1">
    <location>
        <position position="109"/>
    </location>
    <ligand>
        <name>Zn(2+)</name>
        <dbReference type="ChEBI" id="CHEBI:29105"/>
        <note>structural</note>
    </ligand>
</feature>
<feature type="binding site" evidence="1">
    <location>
        <position position="112"/>
    </location>
    <ligand>
        <name>Zn(2+)</name>
        <dbReference type="ChEBI" id="CHEBI:29105"/>
        <note>structural</note>
    </ligand>
</feature>
<feature type="binding site" evidence="1">
    <location>
        <position position="147"/>
    </location>
    <ligand>
        <name>Cu cation</name>
        <dbReference type="ChEBI" id="CHEBI:23378"/>
        <note>catalytic</note>
    </ligand>
</feature>
<feature type="disulfide bond" evidence="1">
    <location>
        <begin position="74"/>
        <end position="169"/>
    </location>
</feature>
<gene>
    <name type="primary">sodC</name>
    <name type="ordered locus">Z2661</name>
    <name type="ordered locus">ECs2355</name>
</gene>
<reference key="1">
    <citation type="journal article" date="2001" name="Nature">
        <title>Genome sequence of enterohaemorrhagic Escherichia coli O157:H7.</title>
        <authorList>
            <person name="Perna N.T."/>
            <person name="Plunkett G. III"/>
            <person name="Burland V."/>
            <person name="Mau B."/>
            <person name="Glasner J.D."/>
            <person name="Rose D.J."/>
            <person name="Mayhew G.F."/>
            <person name="Evans P.S."/>
            <person name="Gregor J."/>
            <person name="Kirkpatrick H.A."/>
            <person name="Posfai G."/>
            <person name="Hackett J."/>
            <person name="Klink S."/>
            <person name="Boutin A."/>
            <person name="Shao Y."/>
            <person name="Miller L."/>
            <person name="Grotbeck E.J."/>
            <person name="Davis N.W."/>
            <person name="Lim A."/>
            <person name="Dimalanta E.T."/>
            <person name="Potamousis K."/>
            <person name="Apodaca J."/>
            <person name="Anantharaman T.S."/>
            <person name="Lin J."/>
            <person name="Yen G."/>
            <person name="Schwartz D.C."/>
            <person name="Welch R.A."/>
            <person name="Blattner F.R."/>
        </authorList>
    </citation>
    <scope>NUCLEOTIDE SEQUENCE [LARGE SCALE GENOMIC DNA]</scope>
    <source>
        <strain>O157:H7 / EDL933 / ATCC 700927 / EHEC</strain>
    </source>
</reference>
<reference key="2">
    <citation type="journal article" date="2001" name="DNA Res.">
        <title>Complete genome sequence of enterohemorrhagic Escherichia coli O157:H7 and genomic comparison with a laboratory strain K-12.</title>
        <authorList>
            <person name="Hayashi T."/>
            <person name="Makino K."/>
            <person name="Ohnishi M."/>
            <person name="Kurokawa K."/>
            <person name="Ishii K."/>
            <person name="Yokoyama K."/>
            <person name="Han C.-G."/>
            <person name="Ohtsubo E."/>
            <person name="Nakayama K."/>
            <person name="Murata T."/>
            <person name="Tanaka M."/>
            <person name="Tobe T."/>
            <person name="Iida T."/>
            <person name="Takami H."/>
            <person name="Honda T."/>
            <person name="Sasakawa C."/>
            <person name="Ogasawara N."/>
            <person name="Yasunaga T."/>
            <person name="Kuhara S."/>
            <person name="Shiba T."/>
            <person name="Hattori M."/>
            <person name="Shinagawa H."/>
        </authorList>
    </citation>
    <scope>NUCLEOTIDE SEQUENCE [LARGE SCALE GENOMIC DNA]</scope>
    <source>
        <strain>O157:H7 / Sakai / RIMD 0509952 / EHEC</strain>
    </source>
</reference>
<sequence>MKRFSLAILALVVATGAQAASEKVEMNLVTSQGVGQSIGSVTITETDKGLEFSPDLKALPPGEHGFHIHAKGSCQPATKDGKASAAESAGGHLDPQNTGKHEGPEGAGHLGDLPALVVNNDGKATDAVIAPRLKSLDEIKDKALMVHVGGDNMSDQPKPLGGGGERYACGVIK</sequence>
<dbReference type="EC" id="1.15.1.1"/>
<dbReference type="EMBL" id="AE005174">
    <property type="protein sequence ID" value="AAG56635.1"/>
    <property type="molecule type" value="Genomic_DNA"/>
</dbReference>
<dbReference type="EMBL" id="BA000007">
    <property type="protein sequence ID" value="BAB35778.1"/>
    <property type="molecule type" value="Genomic_DNA"/>
</dbReference>
<dbReference type="PIR" id="C90923">
    <property type="entry name" value="C90923"/>
</dbReference>
<dbReference type="PIR" id="G85771">
    <property type="entry name" value="G85771"/>
</dbReference>
<dbReference type="RefSeq" id="NP_310382.1">
    <property type="nucleotide sequence ID" value="NC_002695.1"/>
</dbReference>
<dbReference type="RefSeq" id="WP_001296937.1">
    <property type="nucleotide sequence ID" value="NZ_VOAI01000007.1"/>
</dbReference>
<dbReference type="SMR" id="P0AGD2"/>
<dbReference type="STRING" id="155864.Z2661"/>
<dbReference type="GeneID" id="75204491"/>
<dbReference type="GeneID" id="914926"/>
<dbReference type="KEGG" id="ece:Z2661"/>
<dbReference type="KEGG" id="ecs:ECs_2355"/>
<dbReference type="PATRIC" id="fig|386585.9.peg.2464"/>
<dbReference type="eggNOG" id="COG2032">
    <property type="taxonomic scope" value="Bacteria"/>
</dbReference>
<dbReference type="HOGENOM" id="CLU_056632_7_1_6"/>
<dbReference type="OMA" id="GARYACG"/>
<dbReference type="Proteomes" id="UP000000558">
    <property type="component" value="Chromosome"/>
</dbReference>
<dbReference type="Proteomes" id="UP000002519">
    <property type="component" value="Chromosome"/>
</dbReference>
<dbReference type="GO" id="GO:0042597">
    <property type="term" value="C:periplasmic space"/>
    <property type="evidence" value="ECO:0007669"/>
    <property type="project" value="UniProtKB-SubCell"/>
</dbReference>
<dbReference type="GO" id="GO:0005507">
    <property type="term" value="F:copper ion binding"/>
    <property type="evidence" value="ECO:0007669"/>
    <property type="project" value="InterPro"/>
</dbReference>
<dbReference type="GO" id="GO:0004784">
    <property type="term" value="F:superoxide dismutase activity"/>
    <property type="evidence" value="ECO:0007669"/>
    <property type="project" value="UniProtKB-EC"/>
</dbReference>
<dbReference type="CDD" id="cd00305">
    <property type="entry name" value="Cu-Zn_Superoxide_Dismutase"/>
    <property type="match status" value="1"/>
</dbReference>
<dbReference type="FunFam" id="2.60.40.200:FF:000002">
    <property type="entry name" value="Superoxide dismutase [Cu-Zn]"/>
    <property type="match status" value="1"/>
</dbReference>
<dbReference type="Gene3D" id="2.60.40.200">
    <property type="entry name" value="Superoxide dismutase, copper/zinc binding domain"/>
    <property type="match status" value="1"/>
</dbReference>
<dbReference type="InterPro" id="IPR036423">
    <property type="entry name" value="SOD-like_Cu/Zn_dom_sf"/>
</dbReference>
<dbReference type="InterPro" id="IPR024134">
    <property type="entry name" value="SOD_Cu/Zn_/chaperone"/>
</dbReference>
<dbReference type="InterPro" id="IPR018152">
    <property type="entry name" value="SOD_Cu/Zn_BS"/>
</dbReference>
<dbReference type="InterPro" id="IPR001424">
    <property type="entry name" value="SOD_Cu_Zn_dom"/>
</dbReference>
<dbReference type="NCBIfam" id="NF007628">
    <property type="entry name" value="PRK10290.1"/>
    <property type="match status" value="1"/>
</dbReference>
<dbReference type="PANTHER" id="PTHR10003">
    <property type="entry name" value="SUPEROXIDE DISMUTASE CU-ZN -RELATED"/>
    <property type="match status" value="1"/>
</dbReference>
<dbReference type="Pfam" id="PF00080">
    <property type="entry name" value="Sod_Cu"/>
    <property type="match status" value="1"/>
</dbReference>
<dbReference type="SUPFAM" id="SSF49329">
    <property type="entry name" value="Cu,Zn superoxide dismutase-like"/>
    <property type="match status" value="1"/>
</dbReference>
<dbReference type="PROSITE" id="PS00332">
    <property type="entry name" value="SOD_CU_ZN_2"/>
    <property type="match status" value="1"/>
</dbReference>
<comment type="function">
    <text evidence="1">Destroys radicals which are normally produced within the cells and which are toxic to biological systems.</text>
</comment>
<comment type="catalytic activity">
    <reaction>
        <text>2 superoxide + 2 H(+) = H2O2 + O2</text>
        <dbReference type="Rhea" id="RHEA:20696"/>
        <dbReference type="ChEBI" id="CHEBI:15378"/>
        <dbReference type="ChEBI" id="CHEBI:15379"/>
        <dbReference type="ChEBI" id="CHEBI:16240"/>
        <dbReference type="ChEBI" id="CHEBI:18421"/>
        <dbReference type="EC" id="1.15.1.1"/>
    </reaction>
</comment>
<comment type="cofactor">
    <cofactor evidence="1">
        <name>Cu cation</name>
        <dbReference type="ChEBI" id="CHEBI:23378"/>
    </cofactor>
    <text evidence="1">Binds 1 copper ion per subunit.</text>
</comment>
<comment type="cofactor">
    <cofactor evidence="1">
        <name>Zn(2+)</name>
        <dbReference type="ChEBI" id="CHEBI:29105"/>
    </cofactor>
    <text evidence="1">Binds 1 zinc ion per subunit.</text>
</comment>
<comment type="subunit">
    <text evidence="1">Monomer.</text>
</comment>
<comment type="subcellular location">
    <subcellularLocation>
        <location evidence="1">Periplasm</location>
    </subcellularLocation>
</comment>
<comment type="similarity">
    <text evidence="3">Belongs to the Cu-Zn superoxide dismutase family.</text>
</comment>
<name>SODC_ECO57</name>